<protein>
    <recommendedName>
        <fullName>Virion membrane protein OPG140</fullName>
    </recommendedName>
</protein>
<name>PG140_VARV</name>
<proteinExistence type="inferred from homology"/>
<organismHost>
    <name type="scientific">Homo sapiens</name>
    <name type="common">Human</name>
    <dbReference type="NCBI Taxonomy" id="9606"/>
</organismHost>
<reference key="1">
    <citation type="journal article" date="1993" name="Nature">
        <title>Potential virulence determinants in terminal regions of variola smallpox virus genome.</title>
        <authorList>
            <person name="Massung R.F."/>
            <person name="Esposito J.J."/>
            <person name="Liu L.I."/>
            <person name="Qi J."/>
            <person name="Utterback T.R."/>
            <person name="Knight J.C."/>
            <person name="Aubin L."/>
            <person name="Yuran T.E."/>
            <person name="Parsons J.M."/>
            <person name="Loparev V.N."/>
            <person name="Selivanov N.A."/>
            <person name="Cavallaro K.F."/>
            <person name="Kerlavage A.R."/>
            <person name="Mahy B.W.J."/>
            <person name="Venter J.C."/>
        </authorList>
    </citation>
    <scope>NUCLEOTIDE SEQUENCE [GENOMIC DNA]</scope>
    <source>
        <strain>Bangladesh-1975</strain>
    </source>
</reference>
<reference key="2">
    <citation type="submission" date="1995-12" db="EMBL/GenBank/DDBJ databases">
        <title>XhoI-D DNA fragment of Variola minor virus strain Garcia-1966.</title>
        <authorList>
            <person name="Shchelkunov S.N."/>
            <person name="Totmenin A.V."/>
            <person name="Sosnovtsev S.V."/>
            <person name="Safronov P.F."/>
            <person name="Resenchuk S.M."/>
            <person name="Blinov V.M."/>
            <person name="Sandakhchiev L.S."/>
        </authorList>
    </citation>
    <scope>NUCLEOTIDE SEQUENCE [GENOMIC DNA]</scope>
    <source>
        <strain>Garcia-1966</strain>
    </source>
</reference>
<evidence type="ECO:0000250" key="1"/>
<evidence type="ECO:0000250" key="2">
    <source>
        <dbReference type="UniProtKB" id="Q76ZQ3"/>
    </source>
</evidence>
<evidence type="ECO:0000255" key="3"/>
<evidence type="ECO:0000305" key="4"/>
<sequence>MDMMLMIGNYFSGVLIAGIILLILSCIFAFIDFSKSTSPTRTWKVLSIMSFILGIIITVGMLIYSMWGKHCAPHRVSGVIHTNHSDISVN</sequence>
<dbReference type="EMBL" id="L22579">
    <property type="protein sequence ID" value="AAA60866.1"/>
    <property type="molecule type" value="Genomic_DNA"/>
</dbReference>
<dbReference type="EMBL" id="X76268">
    <property type="protein sequence ID" value="CAA53887.1"/>
    <property type="molecule type" value="Genomic_DNA"/>
</dbReference>
<dbReference type="PIR" id="D72165">
    <property type="entry name" value="D72165"/>
</dbReference>
<dbReference type="PIR" id="T28556">
    <property type="entry name" value="T28556"/>
</dbReference>
<dbReference type="RefSeq" id="NP_042162.1">
    <property type="nucleotide sequence ID" value="NC_001611.1"/>
</dbReference>
<dbReference type="SMR" id="P0DSQ4"/>
<dbReference type="GeneID" id="1486489"/>
<dbReference type="KEGG" id="vg:1486489"/>
<dbReference type="Proteomes" id="UP000119805">
    <property type="component" value="Segment"/>
</dbReference>
<dbReference type="GO" id="GO:0016020">
    <property type="term" value="C:membrane"/>
    <property type="evidence" value="ECO:0007669"/>
    <property type="project" value="UniProtKB-KW"/>
</dbReference>
<dbReference type="GO" id="GO:0019031">
    <property type="term" value="C:viral envelope"/>
    <property type="evidence" value="ECO:0007669"/>
    <property type="project" value="UniProtKB-KW"/>
</dbReference>
<dbReference type="GO" id="GO:0055036">
    <property type="term" value="C:virion membrane"/>
    <property type="evidence" value="ECO:0007669"/>
    <property type="project" value="UniProtKB-SubCell"/>
</dbReference>
<dbReference type="InterPro" id="IPR008785">
    <property type="entry name" value="Poxvirus_A14"/>
</dbReference>
<dbReference type="Pfam" id="PF05767">
    <property type="entry name" value="Pox_A14"/>
    <property type="match status" value="1"/>
</dbReference>
<feature type="chain" id="PRO_0000448153" description="Virion membrane protein OPG140">
    <location>
        <begin position="1"/>
        <end position="90"/>
    </location>
</feature>
<feature type="topological domain" description="Intravirion" evidence="3">
    <location>
        <begin position="1"/>
        <end position="10"/>
    </location>
</feature>
<feature type="transmembrane region" description="Helical" evidence="3">
    <location>
        <begin position="11"/>
        <end position="31"/>
    </location>
</feature>
<feature type="topological domain" description="Virion surface" evidence="3">
    <location>
        <begin position="32"/>
        <end position="44"/>
    </location>
</feature>
<feature type="transmembrane region" description="Helical" evidence="3">
    <location>
        <begin position="45"/>
        <end position="65"/>
    </location>
</feature>
<feature type="topological domain" description="Intravirion" evidence="3">
    <location>
        <begin position="66"/>
        <end position="90"/>
    </location>
</feature>
<feature type="modified residue" description="Phosphoserine" evidence="1">
    <location>
        <position position="85"/>
    </location>
</feature>
<feature type="disulfide bond" description="Interchain" evidence="1">
    <location>
        <position position="71"/>
    </location>
</feature>
<organism>
    <name type="scientific">Variola virus</name>
    <dbReference type="NCBI Taxonomy" id="10255"/>
    <lineage>
        <taxon>Viruses</taxon>
        <taxon>Varidnaviria</taxon>
        <taxon>Bamfordvirae</taxon>
        <taxon>Nucleocytoviricota</taxon>
        <taxon>Pokkesviricetes</taxon>
        <taxon>Chitovirales</taxon>
        <taxon>Poxviridae</taxon>
        <taxon>Chordopoxvirinae</taxon>
        <taxon>Orthopoxvirus</taxon>
    </lineage>
</organism>
<gene>
    <name type="primary">OPG140</name>
    <name type="ORF">A14L</name>
    <name type="ORF">A15L</name>
</gene>
<keyword id="KW-1015">Disulfide bond</keyword>
<keyword id="KW-0472">Membrane</keyword>
<keyword id="KW-0597">Phosphoprotein</keyword>
<keyword id="KW-0812">Transmembrane</keyword>
<keyword id="KW-1133">Transmembrane helix</keyword>
<keyword id="KW-0261">Viral envelope protein</keyword>
<keyword id="KW-0946">Virion</keyword>
<accession>P0DSQ4</accession>
<accession>P33839</accession>
<comment type="function">
    <text evidence="2">Envelope protein which is a major component of the mature virion (MV) membrane. Essential for membrane biogenesis. Is required, together with OPG144, to form bona fide crescents, which can progress to form the immature virion (IV) membrane. OPG140 and OPG144 form a lattice that is stabilized by disulfide bonds and serves as an anchor within the viral membrane to which several other proteins important in virion structure and morphogenesis attach.</text>
</comment>
<comment type="subunit">
    <text evidence="2">Homodimer; disulfide-linked. Interacts with OPG144.</text>
</comment>
<comment type="subcellular location">
    <subcellularLocation>
        <location evidence="2">Virion membrane</location>
        <topology evidence="2">Multi-pass membrane protein</topology>
    </subcellularLocation>
    <text evidence="2">Component of the mature virion (MV) membrane.</text>
</comment>
<comment type="PTM">
    <text evidence="2">Phosphorylated by viral OPG054 kinase, phosphorylation state is regulated by OPG106 phosphatase.</text>
</comment>
<comment type="similarity">
    <text evidence="4">Belongs to the orthopoxvirus OPG140 family.</text>
</comment>